<organism>
    <name type="scientific">Methanococcus maripaludis (strain C5 / ATCC BAA-1333)</name>
    <dbReference type="NCBI Taxonomy" id="402880"/>
    <lineage>
        <taxon>Archaea</taxon>
        <taxon>Methanobacteriati</taxon>
        <taxon>Methanobacteriota</taxon>
        <taxon>Methanomada group</taxon>
        <taxon>Methanococci</taxon>
        <taxon>Methanococcales</taxon>
        <taxon>Methanococcaceae</taxon>
        <taxon>Methanococcus</taxon>
    </lineage>
</organism>
<reference key="1">
    <citation type="submission" date="2007-03" db="EMBL/GenBank/DDBJ databases">
        <title>Complete sequence of chromosome of Methanococcus maripaludis C5.</title>
        <authorList>
            <consortium name="US DOE Joint Genome Institute"/>
            <person name="Copeland A."/>
            <person name="Lucas S."/>
            <person name="Lapidus A."/>
            <person name="Barry K."/>
            <person name="Glavina del Rio T."/>
            <person name="Dalin E."/>
            <person name="Tice H."/>
            <person name="Pitluck S."/>
            <person name="Chertkov O."/>
            <person name="Brettin T."/>
            <person name="Bruce D."/>
            <person name="Han C."/>
            <person name="Detter J.C."/>
            <person name="Schmutz J."/>
            <person name="Larimer F."/>
            <person name="Land M."/>
            <person name="Hauser L."/>
            <person name="Kyrpides N."/>
            <person name="Mikhailova N."/>
            <person name="Sieprawska-Lupa M."/>
            <person name="Whitman W.B."/>
            <person name="Richardson P."/>
        </authorList>
    </citation>
    <scope>NUCLEOTIDE SEQUENCE [LARGE SCALE GENOMIC DNA]</scope>
    <source>
        <strain>C5 / ATCC BAA-1333</strain>
    </source>
</reference>
<feature type="chain" id="PRO_1000067072" description="UPF0248 protein MmarC5_1387">
    <location>
        <begin position="1"/>
        <end position="76"/>
    </location>
</feature>
<accession>A4FZQ1</accession>
<comment type="similarity">
    <text evidence="1">Belongs to the UPF0248 family.</text>
</comment>
<protein>
    <recommendedName>
        <fullName evidence="1">UPF0248 protein MmarC5_1387</fullName>
    </recommendedName>
</protein>
<name>Y1387_METM5</name>
<evidence type="ECO:0000255" key="1">
    <source>
        <dbReference type="HAMAP-Rule" id="MF_01245"/>
    </source>
</evidence>
<sequence>MLKELINKLLWHPDYNSEDYLIKYLHRGAENDEKSVPLKNIVIEDSFLVFDETHIPFHRILEIVNLKNGEILYKKR</sequence>
<proteinExistence type="inferred from homology"/>
<dbReference type="EMBL" id="CP000609">
    <property type="protein sequence ID" value="ABO35685.1"/>
    <property type="molecule type" value="Genomic_DNA"/>
</dbReference>
<dbReference type="RefSeq" id="WP_011869136.1">
    <property type="nucleotide sequence ID" value="NC_009135.1"/>
</dbReference>
<dbReference type="STRING" id="402880.MmarC5_1387"/>
<dbReference type="GeneID" id="4929045"/>
<dbReference type="KEGG" id="mmq:MmarC5_1387"/>
<dbReference type="eggNOG" id="arCOG01302">
    <property type="taxonomic scope" value="Archaea"/>
</dbReference>
<dbReference type="HOGENOM" id="CLU_172276_3_1_2"/>
<dbReference type="OrthoDB" id="14794at2157"/>
<dbReference type="Proteomes" id="UP000000253">
    <property type="component" value="Chromosome"/>
</dbReference>
<dbReference type="HAMAP" id="MF_01245">
    <property type="entry name" value="UPF0248"/>
    <property type="match status" value="1"/>
</dbReference>
<dbReference type="InterPro" id="IPR040459">
    <property type="entry name" value="MJ1316"/>
</dbReference>
<dbReference type="InterPro" id="IPR007547">
    <property type="entry name" value="UPF0248"/>
</dbReference>
<dbReference type="NCBIfam" id="NF003272">
    <property type="entry name" value="PRK04257.1"/>
    <property type="match status" value="1"/>
</dbReference>
<dbReference type="Pfam" id="PF04457">
    <property type="entry name" value="MJ1316"/>
    <property type="match status" value="1"/>
</dbReference>
<gene>
    <name type="ordered locus">MmarC5_1387</name>
</gene>